<evidence type="ECO:0000250" key="1">
    <source>
        <dbReference type="UniProtKB" id="P00325"/>
    </source>
</evidence>
<evidence type="ECO:0000269" key="2">
    <source>
    </source>
</evidence>
<evidence type="ECO:0000269" key="3">
    <source>
    </source>
</evidence>
<evidence type="ECO:0000269" key="4">
    <source>
    </source>
</evidence>
<evidence type="ECO:0000269" key="5">
    <source>
    </source>
</evidence>
<evidence type="ECO:0000269" key="6">
    <source>
    </source>
</evidence>
<evidence type="ECO:0000269" key="7">
    <source>
    </source>
</evidence>
<evidence type="ECO:0000269" key="8">
    <source ref="4"/>
</evidence>
<evidence type="ECO:0000305" key="9"/>
<evidence type="ECO:0000305" key="10">
    <source>
    </source>
</evidence>
<evidence type="ECO:0007744" key="11">
    <source>
        <dbReference type="PDB" id="1HT0"/>
    </source>
</evidence>
<evidence type="ECO:0007744" key="12">
    <source>
        <dbReference type="PDB" id="1U3W"/>
    </source>
</evidence>
<evidence type="ECO:0007829" key="13">
    <source>
        <dbReference type="PDB" id="1U3W"/>
    </source>
</evidence>
<feature type="initiator methionine" description="Removed" evidence="6">
    <location>
        <position position="1"/>
    </location>
</feature>
<feature type="chain" id="PRO_0000160664" description="Alcohol dehydrogenase 1C">
    <location>
        <begin position="2"/>
        <end position="375"/>
    </location>
</feature>
<feature type="binding site" evidence="2 3 11 12">
    <location>
        <position position="47"/>
    </location>
    <ligand>
        <name>Zn(2+)</name>
        <dbReference type="ChEBI" id="CHEBI:29105"/>
        <label>1</label>
        <note>catalytic</note>
    </ligand>
</feature>
<feature type="binding site" evidence="2 3 11 12">
    <location>
        <position position="68"/>
    </location>
    <ligand>
        <name>Zn(2+)</name>
        <dbReference type="ChEBI" id="CHEBI:29105"/>
        <label>1</label>
        <note>catalytic</note>
    </ligand>
</feature>
<feature type="binding site" evidence="2 3 11 12">
    <location>
        <position position="98"/>
    </location>
    <ligand>
        <name>Zn(2+)</name>
        <dbReference type="ChEBI" id="CHEBI:29105"/>
        <label>2</label>
    </ligand>
</feature>
<feature type="binding site" evidence="2 3 11 12">
    <location>
        <position position="101"/>
    </location>
    <ligand>
        <name>Zn(2+)</name>
        <dbReference type="ChEBI" id="CHEBI:29105"/>
        <label>2</label>
    </ligand>
</feature>
<feature type="binding site" evidence="2 3 11 12">
    <location>
        <position position="104"/>
    </location>
    <ligand>
        <name>Zn(2+)</name>
        <dbReference type="ChEBI" id="CHEBI:29105"/>
        <label>2</label>
    </ligand>
</feature>
<feature type="binding site" evidence="2 3 11 12">
    <location>
        <position position="112"/>
    </location>
    <ligand>
        <name>Zn(2+)</name>
        <dbReference type="ChEBI" id="CHEBI:29105"/>
        <label>2</label>
    </ligand>
</feature>
<feature type="binding site" evidence="2 3 11 12">
    <location>
        <position position="175"/>
    </location>
    <ligand>
        <name>Zn(2+)</name>
        <dbReference type="ChEBI" id="CHEBI:29105"/>
        <label>1</label>
        <note>catalytic</note>
    </ligand>
</feature>
<feature type="binding site" evidence="2 3 11 12">
    <location>
        <begin position="200"/>
        <end position="205"/>
    </location>
    <ligand>
        <name>NAD(+)</name>
        <dbReference type="ChEBI" id="CHEBI:57540"/>
    </ligand>
</feature>
<feature type="binding site" evidence="2 3 11 12">
    <location>
        <position position="224"/>
    </location>
    <ligand>
        <name>NAD(+)</name>
        <dbReference type="ChEBI" id="CHEBI:57540"/>
    </ligand>
</feature>
<feature type="binding site" evidence="2 3 11 12">
    <location>
        <position position="229"/>
    </location>
    <ligand>
        <name>NAD(+)</name>
        <dbReference type="ChEBI" id="CHEBI:57540"/>
    </ligand>
</feature>
<feature type="binding site" evidence="11 12">
    <location>
        <position position="270"/>
    </location>
    <ligand>
        <name>NAD(+)</name>
        <dbReference type="ChEBI" id="CHEBI:57540"/>
    </ligand>
</feature>
<feature type="binding site" evidence="2 3 11 12">
    <location>
        <begin position="293"/>
        <end position="295"/>
    </location>
    <ligand>
        <name>NAD(+)</name>
        <dbReference type="ChEBI" id="CHEBI:57540"/>
    </ligand>
</feature>
<feature type="binding site" evidence="2 3 11 12">
    <location>
        <begin position="318"/>
        <end position="320"/>
    </location>
    <ligand>
        <name>NAD(+)</name>
        <dbReference type="ChEBI" id="CHEBI:57540"/>
    </ligand>
</feature>
<feature type="binding site" evidence="2 3 11 12">
    <location>
        <position position="370"/>
    </location>
    <ligand>
        <name>NAD(+)</name>
        <dbReference type="ChEBI" id="CHEBI:57540"/>
    </ligand>
</feature>
<feature type="modified residue" description="N-acetylserine" evidence="6">
    <location>
        <position position="2"/>
    </location>
</feature>
<feature type="modified residue" description="Phosphoserine" evidence="1">
    <location>
        <position position="23"/>
    </location>
</feature>
<feature type="sequence variant" id="VAR_023992" description="In dbSNP:rs35385902." evidence="8">
    <original>R</original>
    <variation>H</variation>
    <location>
        <position position="48"/>
    </location>
</feature>
<feature type="sequence variant" id="VAR_023993" description="In dbSNP:rs34195308." evidence="8">
    <original>P</original>
    <variation>S</variation>
    <location>
        <position position="166"/>
    </location>
</feature>
<feature type="sequence variant" id="VAR_000428" description="In allele ADH3*2/gamma-2; dbSNP:rs1693482." evidence="4 5 8">
    <original>R</original>
    <variation>Q</variation>
    <location>
        <position position="272"/>
    </location>
</feature>
<feature type="sequence variant" id="VAR_000429" description="In allele ADH3*2/gamma-2; dbSNP:rs698." evidence="4 5 8">
    <original>I</original>
    <variation>V</variation>
    <location>
        <position position="350"/>
    </location>
</feature>
<feature type="sequence variant" id="VAR_023994" description="In dbSNP:rs35719513." evidence="8">
    <original>P</original>
    <variation>T</variation>
    <location>
        <position position="352"/>
    </location>
</feature>
<feature type="sequence conflict" description="In Ref. 7; AA sequence." evidence="9" ref="7">
    <location>
        <position position="130"/>
    </location>
</feature>
<feature type="sequence conflict" description="In Ref. 6; AAH67421." evidence="9" ref="6">
    <original>C</original>
    <variation>R</variation>
    <location>
        <position position="171"/>
    </location>
</feature>
<feature type="strand" evidence="13">
    <location>
        <begin position="8"/>
        <end position="15"/>
    </location>
</feature>
<feature type="strand" evidence="13">
    <location>
        <begin position="23"/>
        <end position="29"/>
    </location>
</feature>
<feature type="strand" evidence="13">
    <location>
        <begin position="36"/>
        <end position="45"/>
    </location>
</feature>
<feature type="helix" evidence="13">
    <location>
        <begin position="48"/>
        <end position="54"/>
    </location>
</feature>
<feature type="strand" evidence="13">
    <location>
        <begin position="62"/>
        <end position="65"/>
    </location>
</feature>
<feature type="strand" evidence="13">
    <location>
        <begin position="69"/>
        <end position="77"/>
    </location>
</feature>
<feature type="strand" evidence="13">
    <location>
        <begin position="89"/>
        <end position="92"/>
    </location>
</feature>
<feature type="strand" evidence="13">
    <location>
        <begin position="99"/>
        <end position="101"/>
    </location>
</feature>
<feature type="helix" evidence="13">
    <location>
        <begin position="102"/>
        <end position="105"/>
    </location>
</feature>
<feature type="strand" evidence="13">
    <location>
        <begin position="117"/>
        <end position="119"/>
    </location>
</feature>
<feature type="strand" evidence="13">
    <location>
        <begin position="131"/>
        <end position="133"/>
    </location>
</feature>
<feature type="strand" evidence="13">
    <location>
        <begin position="136"/>
        <end position="139"/>
    </location>
</feature>
<feature type="turn" evidence="13">
    <location>
        <begin position="142"/>
        <end position="144"/>
    </location>
</feature>
<feature type="strand" evidence="13">
    <location>
        <begin position="147"/>
        <end position="154"/>
    </location>
</feature>
<feature type="helix" evidence="13">
    <location>
        <begin position="155"/>
        <end position="157"/>
    </location>
</feature>
<feature type="strand" evidence="13">
    <location>
        <begin position="158"/>
        <end position="160"/>
    </location>
</feature>
<feature type="helix" evidence="13">
    <location>
        <begin position="167"/>
        <end position="170"/>
    </location>
</feature>
<feature type="helix" evidence="13">
    <location>
        <begin position="171"/>
        <end position="174"/>
    </location>
</feature>
<feature type="helix" evidence="13">
    <location>
        <begin position="176"/>
        <end position="185"/>
    </location>
</feature>
<feature type="turn" evidence="13">
    <location>
        <begin position="186"/>
        <end position="188"/>
    </location>
</feature>
<feature type="strand" evidence="13">
    <location>
        <begin position="195"/>
        <end position="199"/>
    </location>
</feature>
<feature type="helix" evidence="13">
    <location>
        <begin position="203"/>
        <end position="214"/>
    </location>
</feature>
<feature type="strand" evidence="13">
    <location>
        <begin position="218"/>
        <end position="223"/>
    </location>
</feature>
<feature type="helix" evidence="13">
    <location>
        <begin position="227"/>
        <end position="229"/>
    </location>
</feature>
<feature type="helix" evidence="13">
    <location>
        <begin position="230"/>
        <end position="235"/>
    </location>
</feature>
<feature type="strand" evidence="13">
    <location>
        <begin position="239"/>
        <end position="242"/>
    </location>
</feature>
<feature type="helix" evidence="13">
    <location>
        <begin position="244"/>
        <end position="246"/>
    </location>
</feature>
<feature type="helix" evidence="13">
    <location>
        <begin position="251"/>
        <end position="258"/>
    </location>
</feature>
<feature type="turn" evidence="13">
    <location>
        <begin position="259"/>
        <end position="261"/>
    </location>
</feature>
<feature type="strand" evidence="13">
    <location>
        <begin position="262"/>
        <end position="268"/>
    </location>
</feature>
<feature type="helix" evidence="13">
    <location>
        <begin position="273"/>
        <end position="282"/>
    </location>
</feature>
<feature type="turn" evidence="13">
    <location>
        <begin position="285"/>
        <end position="287"/>
    </location>
</feature>
<feature type="strand" evidence="13">
    <location>
        <begin position="289"/>
        <end position="292"/>
    </location>
</feature>
<feature type="strand" evidence="13">
    <location>
        <begin position="302"/>
        <end position="304"/>
    </location>
</feature>
<feature type="helix" evidence="13">
    <location>
        <begin position="307"/>
        <end position="310"/>
    </location>
</feature>
<feature type="strand" evidence="13">
    <location>
        <begin position="314"/>
        <end position="317"/>
    </location>
</feature>
<feature type="helix" evidence="13">
    <location>
        <begin position="320"/>
        <end position="322"/>
    </location>
</feature>
<feature type="helix" evidence="13">
    <location>
        <begin position="325"/>
        <end position="337"/>
    </location>
</feature>
<feature type="helix" evidence="13">
    <location>
        <begin position="344"/>
        <end position="346"/>
    </location>
</feature>
<feature type="strand" evidence="13">
    <location>
        <begin position="347"/>
        <end position="352"/>
    </location>
</feature>
<feature type="helix" evidence="13">
    <location>
        <begin position="353"/>
        <end position="355"/>
    </location>
</feature>
<feature type="helix" evidence="13">
    <location>
        <begin position="356"/>
        <end position="364"/>
    </location>
</feature>
<feature type="strand" evidence="13">
    <location>
        <begin position="369"/>
        <end position="374"/>
    </location>
</feature>
<proteinExistence type="evidence at protein level"/>
<name>ADH1G_HUMAN</name>
<organism>
    <name type="scientific">Homo sapiens</name>
    <name type="common">Human</name>
    <dbReference type="NCBI Taxonomy" id="9606"/>
    <lineage>
        <taxon>Eukaryota</taxon>
        <taxon>Metazoa</taxon>
        <taxon>Chordata</taxon>
        <taxon>Craniata</taxon>
        <taxon>Vertebrata</taxon>
        <taxon>Euteleostomi</taxon>
        <taxon>Mammalia</taxon>
        <taxon>Eutheria</taxon>
        <taxon>Euarchontoglires</taxon>
        <taxon>Primates</taxon>
        <taxon>Haplorrhini</taxon>
        <taxon>Catarrhini</taxon>
        <taxon>Hominidae</taxon>
        <taxon>Homo</taxon>
    </lineage>
</organism>
<comment type="function">
    <text evidence="7">Alcohol dehydrogenase. Exhibits high activity for ethanol oxidation and plays a major role in ethanol catabolism.</text>
</comment>
<comment type="catalytic activity">
    <reaction evidence="7">
        <text>a primary alcohol + NAD(+) = an aldehyde + NADH + H(+)</text>
        <dbReference type="Rhea" id="RHEA:10736"/>
        <dbReference type="ChEBI" id="CHEBI:15378"/>
        <dbReference type="ChEBI" id="CHEBI:15734"/>
        <dbReference type="ChEBI" id="CHEBI:17478"/>
        <dbReference type="ChEBI" id="CHEBI:57540"/>
        <dbReference type="ChEBI" id="CHEBI:57945"/>
        <dbReference type="EC" id="1.1.1.1"/>
    </reaction>
</comment>
<comment type="catalytic activity">
    <reaction evidence="7">
        <text>ethanol + NAD(+) = acetaldehyde + NADH + H(+)</text>
        <dbReference type="Rhea" id="RHEA:25290"/>
        <dbReference type="ChEBI" id="CHEBI:15343"/>
        <dbReference type="ChEBI" id="CHEBI:15378"/>
        <dbReference type="ChEBI" id="CHEBI:16236"/>
        <dbReference type="ChEBI" id="CHEBI:57540"/>
        <dbReference type="ChEBI" id="CHEBI:57945"/>
        <dbReference type="EC" id="1.1.1.1"/>
    </reaction>
    <physiologicalReaction direction="left-to-right" evidence="10">
        <dbReference type="Rhea" id="RHEA:25291"/>
    </physiologicalReaction>
</comment>
<comment type="cofactor">
    <cofactor evidence="2 3">
        <name>Zn(2+)</name>
        <dbReference type="ChEBI" id="CHEBI:29105"/>
    </cofactor>
    <text evidence="2 3">Binds 2 Zn(2+) ions per subunit.</text>
</comment>
<comment type="subunit">
    <text evidence="2 3">Dimer of identical or non-identical chains of class I alcohol dehydrogenase: ADH1A, ADH1B, and ADH1C.</text>
</comment>
<comment type="interaction">
    <interactant intactId="EBI-21822364">
        <id>P00326</id>
    </interactant>
    <interactant intactId="EBI-2838677">
        <id>P00325</id>
        <label>ADH1B</label>
    </interactant>
    <organismsDiffer>false</organismsDiffer>
    <experiments>2</experiments>
</comment>
<comment type="subcellular location">
    <subcellularLocation>
        <location>Cytoplasm</location>
    </subcellularLocation>
</comment>
<comment type="polymorphism">
    <text evidence="5">Two main alleles are known, ADH3*1 or gamma-1 has Arg-272/Ile-350 while ADH3*2 or gamma-2 has Gln-272/Val-350. ADH3*1 is associated with a fast rate of ethanol oxidation and ADH3*2 with a slow rate.</text>
</comment>
<comment type="miscellaneous">
    <text>There are 7 different ADH's isozymes in human: three belongs to class-I: ADH1A, ADH1B, and ADH1C, one to class-II: ADH4, one to class-III: ADH5, one to class-IV: ADH7 and one to class-V: ADH6.</text>
</comment>
<comment type="similarity">
    <text evidence="9">Belongs to the zinc-containing alcohol dehydrogenase family.</text>
</comment>
<accession>P00326</accession>
<accession>Q4PJ18</accession>
<accession>Q5WRV0</accession>
<accession>Q6LBW4</accession>
<accession>Q6NWV0</accession>
<accession>Q6NZA7</accession>
<sequence length="375" mass="39868">MSTAGKVIKCKAAVLWELKKPFSIEEVEVAPPKAHEVRIKMVAAGICRSDEHVVSGNLVTPLPVILGHEAAGIVESVGEGVTTVKPGDKVIPLFTPQCGKCRICKNPESNYCLKNDLGNPRGTLQDGTRRFTCSGKPIHHFVGVSTFSQYTVVDENAVAKIDAASPLEKVCLIGCGFSTGYGSAVKVAKVTPGSTCAVFGLGGVGLSVVMGCKAAGAARIIAVDINKDKFAKAKELGATECINPQDYKKPIQEVLKEMTDGGVDFSFEVIGRLDTMMASLLCCHEACGTSVIVGVPPDSQNLSINPMLLLTGRTWKGAIFGGFKSKESVPKLVADFMAKKFSLDALITNILPFEKINEGFDLLRSGKSIRTVLTF</sequence>
<keyword id="KW-0002">3D-structure</keyword>
<keyword id="KW-0007">Acetylation</keyword>
<keyword id="KW-0963">Cytoplasm</keyword>
<keyword id="KW-0903">Direct protein sequencing</keyword>
<keyword id="KW-0479">Metal-binding</keyword>
<keyword id="KW-0520">NAD</keyword>
<keyword id="KW-0560">Oxidoreductase</keyword>
<keyword id="KW-0597">Phosphoprotein</keyword>
<keyword id="KW-1267">Proteomics identification</keyword>
<keyword id="KW-1185">Reference proteome</keyword>
<keyword id="KW-0862">Zinc</keyword>
<gene>
    <name type="primary">ADH1C</name>
    <name type="synonym">ADH3</name>
</gene>
<dbReference type="EC" id="1.1.1.1" evidence="7"/>
<dbReference type="EMBL" id="X04299">
    <property type="protein sequence ID" value="CAA27842.1"/>
    <property type="molecule type" value="mRNA"/>
</dbReference>
<dbReference type="EMBL" id="X04350">
    <property type="protein sequence ID" value="CAA27876.1"/>
    <property type="molecule type" value="mRNA"/>
</dbReference>
<dbReference type="EMBL" id="M12272">
    <property type="protein sequence ID" value="AAC41757.1"/>
    <property type="molecule type" value="mRNA"/>
</dbReference>
<dbReference type="EMBL" id="D11067">
    <property type="protein sequence ID" value="BAC06856.1"/>
    <property type="molecule type" value="Genomic_DNA"/>
</dbReference>
<dbReference type="EMBL" id="DQ088981">
    <property type="protein sequence ID" value="AAY68222.1"/>
    <property type="molecule type" value="Genomic_DNA"/>
</dbReference>
<dbReference type="EMBL" id="AC133528">
    <property type="status" value="NOT_ANNOTATED_CDS"/>
    <property type="molecule type" value="Genomic_DNA"/>
</dbReference>
<dbReference type="EMBL" id="BC062476">
    <property type="protein sequence ID" value="AAH62476.1"/>
    <property type="molecule type" value="mRNA"/>
</dbReference>
<dbReference type="EMBL" id="BC066227">
    <property type="protein sequence ID" value="AAH66227.1"/>
    <property type="molecule type" value="mRNA"/>
</dbReference>
<dbReference type="EMBL" id="BC066228">
    <property type="protein sequence ID" value="AAH66228.1"/>
    <property type="molecule type" value="mRNA"/>
</dbReference>
<dbReference type="EMBL" id="BC067419">
    <property type="protein sequence ID" value="AAH67419.1"/>
    <property type="molecule type" value="mRNA"/>
</dbReference>
<dbReference type="EMBL" id="BC067420">
    <property type="protein sequence ID" value="AAH67420.1"/>
    <property type="molecule type" value="mRNA"/>
</dbReference>
<dbReference type="EMBL" id="BC067421">
    <property type="protein sequence ID" value="AAH67421.1"/>
    <property type="molecule type" value="mRNA"/>
</dbReference>
<dbReference type="EMBL" id="BC067422">
    <property type="protein sequence ID" value="AAH67422.1"/>
    <property type="molecule type" value="mRNA"/>
</dbReference>
<dbReference type="EMBL" id="BC074771">
    <property type="protein sequence ID" value="AAH74771.1"/>
    <property type="molecule type" value="mRNA"/>
</dbReference>
<dbReference type="EMBL" id="BC074786">
    <property type="protein sequence ID" value="AAH74786.1"/>
    <property type="molecule type" value="mRNA"/>
</dbReference>
<dbReference type="CCDS" id="CCDS54780.1"/>
<dbReference type="PIR" id="C25428">
    <property type="entry name" value="DEHUAG"/>
</dbReference>
<dbReference type="RefSeq" id="NP_000660.1">
    <property type="nucleotide sequence ID" value="NM_000669.5"/>
</dbReference>
<dbReference type="PDB" id="1HT0">
    <property type="method" value="X-ray"/>
    <property type="resolution" value="2.00 A"/>
    <property type="chains" value="A/B=2-375"/>
</dbReference>
<dbReference type="PDB" id="1U3W">
    <property type="method" value="X-ray"/>
    <property type="resolution" value="1.45 A"/>
    <property type="chains" value="A/B=2-375"/>
</dbReference>
<dbReference type="PDBsum" id="1HT0"/>
<dbReference type="PDBsum" id="1U3W"/>
<dbReference type="SMR" id="P00326"/>
<dbReference type="BioGRID" id="106638">
    <property type="interactions" value="20"/>
</dbReference>
<dbReference type="CORUM" id="P00326"/>
<dbReference type="FunCoup" id="P00326">
    <property type="interactions" value="304"/>
</dbReference>
<dbReference type="IntAct" id="P00326">
    <property type="interactions" value="17"/>
</dbReference>
<dbReference type="STRING" id="9606.ENSP00000426083"/>
<dbReference type="BindingDB" id="P00326"/>
<dbReference type="ChEMBL" id="CHEMBL3285"/>
<dbReference type="DrugBank" id="DB03061">
    <property type="generic name" value="(R)-N-(1-Methyl-Hexyl)-Formamide"/>
</dbReference>
<dbReference type="DrugBank" id="DB01711">
    <property type="generic name" value="2,3,4,5,6-Pentafluorobenzyl Alcohol"/>
</dbReference>
<dbReference type="DrugBank" id="DB04312">
    <property type="generic name" value="2,3-Difluorobenzyl Alcohol"/>
</dbReference>
<dbReference type="DrugBank" id="DB04448">
    <property type="generic name" value="2,4-Difluorobenzyl Alcohol 2,4-Difluoro-1-(Hydroxymethyl)Benzene"/>
</dbReference>
<dbReference type="DrugBank" id="DB02249">
    <property type="generic name" value="2-Ethoxyethanol"/>
</dbReference>
<dbReference type="DrugBank" id="DB02871">
    <property type="generic name" value="3-Butylthiolane 1-Oxide"/>
</dbReference>
<dbReference type="DrugBank" id="DB02721">
    <property type="generic name" value="4-Iodopyrazole"/>
</dbReference>
<dbReference type="DrugBank" id="DB03020">
    <property type="generic name" value="5-beta-D-ribofuranosylnicotinamide adenine dinucleotide"/>
</dbReference>
<dbReference type="DrugBank" id="DB02659">
    <property type="generic name" value="Cholic Acid"/>
</dbReference>
<dbReference type="DrugBank" id="DB04071">
    <property type="generic name" value="Cpad"/>
</dbReference>
<dbReference type="DrugBank" id="DB03559">
    <property type="generic name" value="Cyclohexylformamide"/>
</dbReference>
<dbReference type="DrugBank" id="DB00898">
    <property type="generic name" value="Ethanol"/>
</dbReference>
<dbReference type="DrugBank" id="DB01213">
    <property type="generic name" value="Fomepizole"/>
</dbReference>
<dbReference type="DrugBank" id="DB02131">
    <property type="generic name" value="N-1-methylheptylformamide"/>
</dbReference>
<dbReference type="DrugBank" id="DB04113">
    <property type="generic name" value="N-Formylpiperidine"/>
</dbReference>
<dbReference type="DrugBank" id="DB00157">
    <property type="generic name" value="NADH"/>
</dbReference>
<dbReference type="DrugBank" id="DB02822">
    <property type="generic name" value="Para-Bromobenzyl Alcohol"/>
</dbReference>
<dbReference type="DrugBank" id="DB02757">
    <property type="generic name" value="Pyrazole"/>
</dbReference>
<dbReference type="DrugBank" id="DB03226">
    <property type="generic name" value="Trifluoroethanol"/>
</dbReference>
<dbReference type="DrugBank" id="DB14487">
    <property type="generic name" value="Zinc acetate"/>
</dbReference>
<dbReference type="DrugBank" id="DB14533">
    <property type="generic name" value="Zinc chloride"/>
</dbReference>
<dbReference type="DrugBank" id="DB14548">
    <property type="generic name" value="Zinc sulfate, unspecified form"/>
</dbReference>
<dbReference type="DrugCentral" id="P00326"/>
<dbReference type="GlyGen" id="P00326">
    <property type="glycosylation" value="2 sites, 1 O-linked glycan (1 site)"/>
</dbReference>
<dbReference type="iPTMnet" id="P00326"/>
<dbReference type="PhosphoSitePlus" id="P00326"/>
<dbReference type="BioMuta" id="ADH1C"/>
<dbReference type="DMDM" id="113398"/>
<dbReference type="jPOST" id="P00326"/>
<dbReference type="MassIVE" id="P00326"/>
<dbReference type="PaxDb" id="9606-ENSP00000426083"/>
<dbReference type="PeptideAtlas" id="P00326"/>
<dbReference type="ProteomicsDB" id="51229"/>
<dbReference type="TopDownProteomics" id="P00326"/>
<dbReference type="Antibodypedia" id="73653">
    <property type="antibodies" value="144 antibodies from 23 providers"/>
</dbReference>
<dbReference type="DNASU" id="126"/>
<dbReference type="Ensembl" id="ENST00000515683.6">
    <property type="protein sequence ID" value="ENSP00000426083.1"/>
    <property type="gene ID" value="ENSG00000248144.6"/>
</dbReference>
<dbReference type="GeneID" id="126"/>
<dbReference type="KEGG" id="hsa:126"/>
<dbReference type="MANE-Select" id="ENST00000515683.6">
    <property type="protein sequence ID" value="ENSP00000426083.1"/>
    <property type="RefSeq nucleotide sequence ID" value="NM_000669.5"/>
    <property type="RefSeq protein sequence ID" value="NP_000660.1"/>
</dbReference>
<dbReference type="UCSC" id="uc032trd.2">
    <property type="organism name" value="human"/>
</dbReference>
<dbReference type="AGR" id="HGNC:251"/>
<dbReference type="CTD" id="126"/>
<dbReference type="DisGeNET" id="126"/>
<dbReference type="GeneCards" id="ADH1C"/>
<dbReference type="HGNC" id="HGNC:251">
    <property type="gene designation" value="ADH1C"/>
</dbReference>
<dbReference type="HPA" id="ENSG00000248144">
    <property type="expression patterns" value="Group enriched (intestine, liver, stomach)"/>
</dbReference>
<dbReference type="MalaCards" id="ADH1C"/>
<dbReference type="MIM" id="103730">
    <property type="type" value="gene"/>
</dbReference>
<dbReference type="neXtProt" id="NX_P00326"/>
<dbReference type="OpenTargets" id="ENSG00000248144"/>
<dbReference type="PharmGKB" id="PA24572"/>
<dbReference type="VEuPathDB" id="HostDB:ENSG00000248144"/>
<dbReference type="eggNOG" id="KOG0022">
    <property type="taxonomic scope" value="Eukaryota"/>
</dbReference>
<dbReference type="GeneTree" id="ENSGT00940000155234"/>
<dbReference type="HOGENOM" id="CLU_026673_14_0_1"/>
<dbReference type="InParanoid" id="P00326"/>
<dbReference type="OMA" id="YIFAVEP"/>
<dbReference type="OrthoDB" id="417550at2759"/>
<dbReference type="PAN-GO" id="P00326">
    <property type="GO annotations" value="7 GO annotations based on evolutionary models"/>
</dbReference>
<dbReference type="BRENDA" id="1.1.1.1">
    <property type="organism ID" value="2681"/>
</dbReference>
<dbReference type="PathwayCommons" id="P00326"/>
<dbReference type="Reactome" id="R-HSA-5365859">
    <property type="pathway name" value="RA biosynthesis pathway"/>
</dbReference>
<dbReference type="Reactome" id="R-HSA-71384">
    <property type="pathway name" value="Ethanol oxidation"/>
</dbReference>
<dbReference type="SABIO-RK" id="P00326"/>
<dbReference type="SignaLink" id="P00326"/>
<dbReference type="BioGRID-ORCS" id="126">
    <property type="hits" value="5 hits in 237 CRISPR screens"/>
</dbReference>
<dbReference type="ChiTaRS" id="ADH1C">
    <property type="organism name" value="human"/>
</dbReference>
<dbReference type="EvolutionaryTrace" id="P00326"/>
<dbReference type="GeneWiki" id="ADH1C"/>
<dbReference type="GenomeRNAi" id="126"/>
<dbReference type="Pharos" id="P00326">
    <property type="development level" value="Tclin"/>
</dbReference>
<dbReference type="PRO" id="PR:P00326"/>
<dbReference type="Proteomes" id="UP000005640">
    <property type="component" value="Chromosome 4"/>
</dbReference>
<dbReference type="RNAct" id="P00326">
    <property type="molecule type" value="protein"/>
</dbReference>
<dbReference type="Bgee" id="ENSG00000248144">
    <property type="expression patterns" value="Expressed in mucosa of transverse colon and 130 other cell types or tissues"/>
</dbReference>
<dbReference type="ExpressionAtlas" id="P00326">
    <property type="expression patterns" value="baseline and differential"/>
</dbReference>
<dbReference type="GO" id="GO:0036064">
    <property type="term" value="C:ciliary basal body"/>
    <property type="evidence" value="ECO:0000314"/>
    <property type="project" value="HPA"/>
</dbReference>
<dbReference type="GO" id="GO:0005929">
    <property type="term" value="C:cilium"/>
    <property type="evidence" value="ECO:0000314"/>
    <property type="project" value="HPA"/>
</dbReference>
<dbReference type="GO" id="GO:0005829">
    <property type="term" value="C:cytosol"/>
    <property type="evidence" value="ECO:0000314"/>
    <property type="project" value="HPA"/>
</dbReference>
<dbReference type="GO" id="GO:0005654">
    <property type="term" value="C:nucleoplasm"/>
    <property type="evidence" value="ECO:0000314"/>
    <property type="project" value="HPA"/>
</dbReference>
<dbReference type="GO" id="GO:0005886">
    <property type="term" value="C:plasma membrane"/>
    <property type="evidence" value="ECO:0000314"/>
    <property type="project" value="HPA"/>
</dbReference>
<dbReference type="GO" id="GO:0004022">
    <property type="term" value="F:alcohol dehydrogenase (NAD+) activity"/>
    <property type="evidence" value="ECO:0000314"/>
    <property type="project" value="UniProtKB"/>
</dbReference>
<dbReference type="GO" id="GO:0004745">
    <property type="term" value="F:all-trans-retinol dehydrogenase (NAD+) activity"/>
    <property type="evidence" value="ECO:0000318"/>
    <property type="project" value="GO_Central"/>
</dbReference>
<dbReference type="GO" id="GO:0120542">
    <property type="term" value="F:ethanol dehydrogenase (NAD+) activity"/>
    <property type="evidence" value="ECO:0007669"/>
    <property type="project" value="RHEA"/>
</dbReference>
<dbReference type="GO" id="GO:0008270">
    <property type="term" value="F:zinc ion binding"/>
    <property type="evidence" value="ECO:0000318"/>
    <property type="project" value="GO_Central"/>
</dbReference>
<dbReference type="GO" id="GO:0042573">
    <property type="term" value="P:retinoic acid metabolic process"/>
    <property type="evidence" value="ECO:0000318"/>
    <property type="project" value="GO_Central"/>
</dbReference>
<dbReference type="GO" id="GO:0042572">
    <property type="term" value="P:retinol metabolic process"/>
    <property type="evidence" value="ECO:0000318"/>
    <property type="project" value="GO_Central"/>
</dbReference>
<dbReference type="CDD" id="cd08299">
    <property type="entry name" value="alcohol_DH_class_I_II_IV"/>
    <property type="match status" value="1"/>
</dbReference>
<dbReference type="FunFam" id="3.40.50.720:FF:000003">
    <property type="entry name" value="S-(hydroxymethyl)glutathione dehydrogenase"/>
    <property type="match status" value="1"/>
</dbReference>
<dbReference type="FunFam" id="3.90.180.10:FF:000001">
    <property type="entry name" value="S-(hydroxymethyl)glutathione dehydrogenase"/>
    <property type="match status" value="1"/>
</dbReference>
<dbReference type="Gene3D" id="3.90.180.10">
    <property type="entry name" value="Medium-chain alcohol dehydrogenases, catalytic domain"/>
    <property type="match status" value="1"/>
</dbReference>
<dbReference type="Gene3D" id="3.40.50.720">
    <property type="entry name" value="NAD(P)-binding Rossmann-like Domain"/>
    <property type="match status" value="1"/>
</dbReference>
<dbReference type="InterPro" id="IPR013149">
    <property type="entry name" value="ADH-like_C"/>
</dbReference>
<dbReference type="InterPro" id="IPR013154">
    <property type="entry name" value="ADH-like_N"/>
</dbReference>
<dbReference type="InterPro" id="IPR002328">
    <property type="entry name" value="ADH_Zn_CS"/>
</dbReference>
<dbReference type="InterPro" id="IPR011032">
    <property type="entry name" value="GroES-like_sf"/>
</dbReference>
<dbReference type="InterPro" id="IPR036291">
    <property type="entry name" value="NAD(P)-bd_dom_sf"/>
</dbReference>
<dbReference type="InterPro" id="IPR020843">
    <property type="entry name" value="PKS_ER"/>
</dbReference>
<dbReference type="PANTHER" id="PTHR43880">
    <property type="entry name" value="ALCOHOL DEHYDROGENASE"/>
    <property type="match status" value="1"/>
</dbReference>
<dbReference type="PANTHER" id="PTHR43880:SF57">
    <property type="entry name" value="ALCOHOL DEHYDROGENASE 1C"/>
    <property type="match status" value="1"/>
</dbReference>
<dbReference type="Pfam" id="PF08240">
    <property type="entry name" value="ADH_N"/>
    <property type="match status" value="1"/>
</dbReference>
<dbReference type="Pfam" id="PF00107">
    <property type="entry name" value="ADH_zinc_N"/>
    <property type="match status" value="1"/>
</dbReference>
<dbReference type="SMART" id="SM00829">
    <property type="entry name" value="PKS_ER"/>
    <property type="match status" value="1"/>
</dbReference>
<dbReference type="SUPFAM" id="SSF50129">
    <property type="entry name" value="GroES-like"/>
    <property type="match status" value="2"/>
</dbReference>
<dbReference type="SUPFAM" id="SSF51735">
    <property type="entry name" value="NAD(P)-binding Rossmann-fold domains"/>
    <property type="match status" value="1"/>
</dbReference>
<dbReference type="PROSITE" id="PS00059">
    <property type="entry name" value="ADH_ZINC"/>
    <property type="match status" value="1"/>
</dbReference>
<protein>
    <recommendedName>
        <fullName>Alcohol dehydrogenase 1C</fullName>
        <ecNumber evidence="7">1.1.1.1</ecNumber>
    </recommendedName>
    <alternativeName>
        <fullName>Alcohol dehydrogenase subunit gamma</fullName>
    </alternativeName>
</protein>
<reference key="1">
    <citation type="journal article" date="1986" name="Eur. J. Biochem.">
        <title>The gamma 1 and gamma 2 subunits of human liver alcohol dehydrogenase. cDNA structures, two amino acid replacements, and compatibility with changes in the enzymatic properties.</title>
        <authorList>
            <person name="Hoeoeg J.-O."/>
            <person name="Heden L.-O."/>
            <person name="Larsson K."/>
            <person name="Joernvall H."/>
        </authorList>
    </citation>
    <scope>NUCLEOTIDE SEQUENCE [MRNA]</scope>
    <scope>VARIANTS GAMMA-2 GLN-272 AND VAL-350</scope>
    <scope>POLYMORPHISM</scope>
    <source>
        <tissue>Liver</tissue>
    </source>
</reference>
<reference key="2">
    <citation type="journal article" date="1986" name="Proc. Natl. Acad. Sci. U.S.A.">
        <title>Three human alcohol dehydrogenase subunits: cDNA structure and molecular and evolutionary divergence.</title>
        <authorList>
            <person name="Ikuta T."/>
            <person name="Szeto S."/>
            <person name="Yoshida A."/>
        </authorList>
    </citation>
    <scope>NUCLEOTIDE SEQUENCE [MRNA]</scope>
    <source>
        <tissue>Liver</tissue>
    </source>
</reference>
<reference key="3">
    <citation type="journal article" date="1992" name="Jpn. J. Genet.">
        <title>Molecular structure of the human alcohol dehydrogenase 3 gene.</title>
        <authorList>
            <person name="Yokoyama S."/>
            <person name="Matsuo Y."/>
            <person name="Rajasekharan S."/>
            <person name="Yokoyama R."/>
        </authorList>
    </citation>
    <scope>NUCLEOTIDE SEQUENCE [GENOMIC DNA]</scope>
</reference>
<reference key="4">
    <citation type="submission" date="2005-06" db="EMBL/GenBank/DDBJ databases">
        <authorList>
            <consortium name="NIEHS SNPs program"/>
        </authorList>
    </citation>
    <scope>NUCLEOTIDE SEQUENCE [GENOMIC DNA]</scope>
    <scope>VARIANTS HIS-48; SER-166; GLN-272; VAL-350 AND THR-352</scope>
</reference>
<reference key="5">
    <citation type="journal article" date="2005" name="Nature">
        <title>Generation and annotation of the DNA sequences of human chromosomes 2 and 4.</title>
        <authorList>
            <person name="Hillier L.W."/>
            <person name="Graves T.A."/>
            <person name="Fulton R.S."/>
            <person name="Fulton L.A."/>
            <person name="Pepin K.H."/>
            <person name="Minx P."/>
            <person name="Wagner-McPherson C."/>
            <person name="Layman D."/>
            <person name="Wylie K."/>
            <person name="Sekhon M."/>
            <person name="Becker M.C."/>
            <person name="Fewell G.A."/>
            <person name="Delehaunty K.D."/>
            <person name="Miner T.L."/>
            <person name="Nash W.E."/>
            <person name="Kremitzki C."/>
            <person name="Oddy L."/>
            <person name="Du H."/>
            <person name="Sun H."/>
            <person name="Bradshaw-Cordum H."/>
            <person name="Ali J."/>
            <person name="Carter J."/>
            <person name="Cordes M."/>
            <person name="Harris A."/>
            <person name="Isak A."/>
            <person name="van Brunt A."/>
            <person name="Nguyen C."/>
            <person name="Du F."/>
            <person name="Courtney L."/>
            <person name="Kalicki J."/>
            <person name="Ozersky P."/>
            <person name="Abbott S."/>
            <person name="Armstrong J."/>
            <person name="Belter E.A."/>
            <person name="Caruso L."/>
            <person name="Cedroni M."/>
            <person name="Cotton M."/>
            <person name="Davidson T."/>
            <person name="Desai A."/>
            <person name="Elliott G."/>
            <person name="Erb T."/>
            <person name="Fronick C."/>
            <person name="Gaige T."/>
            <person name="Haakenson W."/>
            <person name="Haglund K."/>
            <person name="Holmes A."/>
            <person name="Harkins R."/>
            <person name="Kim K."/>
            <person name="Kruchowski S.S."/>
            <person name="Strong C.M."/>
            <person name="Grewal N."/>
            <person name="Goyea E."/>
            <person name="Hou S."/>
            <person name="Levy A."/>
            <person name="Martinka S."/>
            <person name="Mead K."/>
            <person name="McLellan M.D."/>
            <person name="Meyer R."/>
            <person name="Randall-Maher J."/>
            <person name="Tomlinson C."/>
            <person name="Dauphin-Kohlberg S."/>
            <person name="Kozlowicz-Reilly A."/>
            <person name="Shah N."/>
            <person name="Swearengen-Shahid S."/>
            <person name="Snider J."/>
            <person name="Strong J.T."/>
            <person name="Thompson J."/>
            <person name="Yoakum M."/>
            <person name="Leonard S."/>
            <person name="Pearman C."/>
            <person name="Trani L."/>
            <person name="Radionenko M."/>
            <person name="Waligorski J.E."/>
            <person name="Wang C."/>
            <person name="Rock S.M."/>
            <person name="Tin-Wollam A.-M."/>
            <person name="Maupin R."/>
            <person name="Latreille P."/>
            <person name="Wendl M.C."/>
            <person name="Yang S.-P."/>
            <person name="Pohl C."/>
            <person name="Wallis J.W."/>
            <person name="Spieth J."/>
            <person name="Bieri T.A."/>
            <person name="Berkowicz N."/>
            <person name="Nelson J.O."/>
            <person name="Osborne J."/>
            <person name="Ding L."/>
            <person name="Meyer R."/>
            <person name="Sabo A."/>
            <person name="Shotland Y."/>
            <person name="Sinha P."/>
            <person name="Wohldmann P.E."/>
            <person name="Cook L.L."/>
            <person name="Hickenbotham M.T."/>
            <person name="Eldred J."/>
            <person name="Williams D."/>
            <person name="Jones T.A."/>
            <person name="She X."/>
            <person name="Ciccarelli F.D."/>
            <person name="Izaurralde E."/>
            <person name="Taylor J."/>
            <person name="Schmutz J."/>
            <person name="Myers R.M."/>
            <person name="Cox D.R."/>
            <person name="Huang X."/>
            <person name="McPherson J.D."/>
            <person name="Mardis E.R."/>
            <person name="Clifton S.W."/>
            <person name="Warren W.C."/>
            <person name="Chinwalla A.T."/>
            <person name="Eddy S.R."/>
            <person name="Marra M.A."/>
            <person name="Ovcharenko I."/>
            <person name="Furey T.S."/>
            <person name="Miller W."/>
            <person name="Eichler E.E."/>
            <person name="Bork P."/>
            <person name="Suyama M."/>
            <person name="Torrents D."/>
            <person name="Waterston R.H."/>
            <person name="Wilson R.K."/>
        </authorList>
    </citation>
    <scope>NUCLEOTIDE SEQUENCE [LARGE SCALE GENOMIC DNA]</scope>
</reference>
<reference key="6">
    <citation type="journal article" date="2004" name="Genome Res.">
        <title>The status, quality, and expansion of the NIH full-length cDNA project: the Mammalian Gene Collection (MGC).</title>
        <authorList>
            <consortium name="The MGC Project Team"/>
        </authorList>
    </citation>
    <scope>NUCLEOTIDE SEQUENCE [LARGE SCALE MRNA]</scope>
    <scope>VARIANTS GAMMA-2 GLN-272 AND VAL-350</scope>
    <source>
        <tissue>Brain</tissue>
        <tissue>Femoral artery</tissue>
    </source>
</reference>
<reference key="7">
    <citation type="journal article" date="1984" name="Eur. J. Biochem.">
        <title>Human liver alcohol dehydrogenase. 2. The primary structure of the gamma 1 protein chain.</title>
        <authorList>
            <person name="Buhler R."/>
            <person name="Hempel J."/>
            <person name="Kaiser R."/>
            <person name="de Zalenski C."/>
            <person name="von Wartburg J.-P."/>
            <person name="Joernvall H."/>
        </authorList>
    </citation>
    <scope>PROTEIN SEQUENCE OF 2-375</scope>
    <scope>CLEAVAGE OF INITIATOR METHIONINE</scope>
    <scope>ACETYLATION AT SER-2</scope>
    <source>
        <tissue>Liver</tissue>
    </source>
</reference>
<reference key="8">
    <citation type="journal article" date="1984" name="FEBS Lett.">
        <title>Differential susceptibility of human alcohol dehydrogenase isoenzymes to anions.</title>
        <authorList>
            <person name="Buehler R."/>
            <person name="Von Wartburg J.P."/>
        </authorList>
    </citation>
    <scope>FUNCTION</scope>
    <scope>CATALYTIC ACTIVITY</scope>
</reference>
<reference key="9">
    <citation type="journal article" date="2014" name="J. Proteomics">
        <title>An enzyme assisted RP-RPLC approach for in-depth analysis of human liver phosphoproteome.</title>
        <authorList>
            <person name="Bian Y."/>
            <person name="Song C."/>
            <person name="Cheng K."/>
            <person name="Dong M."/>
            <person name="Wang F."/>
            <person name="Huang J."/>
            <person name="Sun D."/>
            <person name="Wang L."/>
            <person name="Ye M."/>
            <person name="Zou H."/>
        </authorList>
    </citation>
    <scope>IDENTIFICATION BY MASS SPECTROMETRY [LARGE SCALE ANALYSIS]</scope>
    <source>
        <tissue>Liver</tissue>
    </source>
</reference>
<reference key="10">
    <citation type="journal article" date="2001" name="Protein Sci.">
        <title>Three-dimensional structures of the three human class I alcohol dehydrogenases.</title>
        <authorList>
            <person name="Niederhut M.S."/>
            <person name="Gibbons B.J."/>
            <person name="Perez-Miller S."/>
            <person name="Hurley T.D."/>
        </authorList>
    </citation>
    <scope>X-RAY CRYSTALLOGRAPHY (2.5 ANGSTROMS) IN COMPLEX WITH NAD AND ZINC IONS</scope>
</reference>
<reference key="11">
    <citation type="journal article" date="2004" name="Biochemistry">
        <title>Structure of three class I human alcohol dehydrogenases complexed with isoenzyme specific formamide inhibitors.</title>
        <authorList>
            <person name="Gibbons B.J."/>
            <person name="Hurley T.D."/>
        </authorList>
    </citation>
    <scope>X-RAY CRYSTALLOGRAPHY (2.49 ANGSTROMS) IN COMPLEX WITH NAD AND ZINC IONS</scope>
</reference>